<accession>B4TTW2</accession>
<sequence length="103" mass="11575">MGKLTLLLLALLVWLQYSLWFGKNGIHDYSRVNDDVVAQQATNAKLKARNDQLFAEIDDLNGGQEAIEERARNELSMTKPGETFYRLVPDASKRAATAGQTHR</sequence>
<evidence type="ECO:0000255" key="1">
    <source>
        <dbReference type="HAMAP-Rule" id="MF_00599"/>
    </source>
</evidence>
<dbReference type="EMBL" id="CP001127">
    <property type="protein sequence ID" value="ACF91135.1"/>
    <property type="molecule type" value="Genomic_DNA"/>
</dbReference>
<dbReference type="RefSeq" id="WP_000517480.1">
    <property type="nucleotide sequence ID" value="NC_011094.1"/>
</dbReference>
<dbReference type="SMR" id="B4TTW2"/>
<dbReference type="KEGG" id="sew:SeSA_A3082"/>
<dbReference type="HOGENOM" id="CLU_134863_5_2_6"/>
<dbReference type="Proteomes" id="UP000001865">
    <property type="component" value="Chromosome"/>
</dbReference>
<dbReference type="GO" id="GO:0032153">
    <property type="term" value="C:cell division site"/>
    <property type="evidence" value="ECO:0007669"/>
    <property type="project" value="UniProtKB-UniRule"/>
</dbReference>
<dbReference type="GO" id="GO:0030428">
    <property type="term" value="C:cell septum"/>
    <property type="evidence" value="ECO:0007669"/>
    <property type="project" value="TreeGrafter"/>
</dbReference>
<dbReference type="GO" id="GO:0005886">
    <property type="term" value="C:plasma membrane"/>
    <property type="evidence" value="ECO:0007669"/>
    <property type="project" value="UniProtKB-SubCell"/>
</dbReference>
<dbReference type="GO" id="GO:0043093">
    <property type="term" value="P:FtsZ-dependent cytokinesis"/>
    <property type="evidence" value="ECO:0007669"/>
    <property type="project" value="UniProtKB-UniRule"/>
</dbReference>
<dbReference type="FunFam" id="1.20.5.400:FF:000001">
    <property type="entry name" value="Cell division protein FtsB"/>
    <property type="match status" value="1"/>
</dbReference>
<dbReference type="Gene3D" id="1.20.5.400">
    <property type="match status" value="1"/>
</dbReference>
<dbReference type="HAMAP" id="MF_00599">
    <property type="entry name" value="FtsB"/>
    <property type="match status" value="1"/>
</dbReference>
<dbReference type="InterPro" id="IPR023081">
    <property type="entry name" value="Cell_div_FtsB"/>
</dbReference>
<dbReference type="InterPro" id="IPR007060">
    <property type="entry name" value="FtsL/DivIC"/>
</dbReference>
<dbReference type="NCBIfam" id="NF002058">
    <property type="entry name" value="PRK00888.1"/>
    <property type="match status" value="1"/>
</dbReference>
<dbReference type="PANTHER" id="PTHR37485">
    <property type="entry name" value="CELL DIVISION PROTEIN FTSB"/>
    <property type="match status" value="1"/>
</dbReference>
<dbReference type="PANTHER" id="PTHR37485:SF1">
    <property type="entry name" value="CELL DIVISION PROTEIN FTSB"/>
    <property type="match status" value="1"/>
</dbReference>
<dbReference type="Pfam" id="PF04977">
    <property type="entry name" value="DivIC"/>
    <property type="match status" value="1"/>
</dbReference>
<gene>
    <name evidence="1" type="primary">ftsB</name>
    <name type="ordered locus">SeSA_A3082</name>
</gene>
<name>FTSB_SALSV</name>
<organism>
    <name type="scientific">Salmonella schwarzengrund (strain CVM19633)</name>
    <dbReference type="NCBI Taxonomy" id="439843"/>
    <lineage>
        <taxon>Bacteria</taxon>
        <taxon>Pseudomonadati</taxon>
        <taxon>Pseudomonadota</taxon>
        <taxon>Gammaproteobacteria</taxon>
        <taxon>Enterobacterales</taxon>
        <taxon>Enterobacteriaceae</taxon>
        <taxon>Salmonella</taxon>
    </lineage>
</organism>
<keyword id="KW-0131">Cell cycle</keyword>
<keyword id="KW-0132">Cell division</keyword>
<keyword id="KW-0997">Cell inner membrane</keyword>
<keyword id="KW-1003">Cell membrane</keyword>
<keyword id="KW-0175">Coiled coil</keyword>
<keyword id="KW-0472">Membrane</keyword>
<keyword id="KW-0812">Transmembrane</keyword>
<keyword id="KW-1133">Transmembrane helix</keyword>
<proteinExistence type="inferred from homology"/>
<comment type="function">
    <text evidence="1">Essential cell division protein. May link together the upstream cell division proteins, which are predominantly cytoplasmic, with the downstream cell division proteins, which are predominantly periplasmic.</text>
</comment>
<comment type="subunit">
    <text evidence="1">Part of a complex composed of FtsB, FtsL and FtsQ.</text>
</comment>
<comment type="subcellular location">
    <subcellularLocation>
        <location evidence="1">Cell inner membrane</location>
        <topology evidence="1">Single-pass type II membrane protein</topology>
    </subcellularLocation>
    <text evidence="1">Localizes to the division septum.</text>
</comment>
<comment type="similarity">
    <text evidence="1">Belongs to the FtsB family.</text>
</comment>
<reference key="1">
    <citation type="journal article" date="2011" name="J. Bacteriol.">
        <title>Comparative genomics of 28 Salmonella enterica isolates: evidence for CRISPR-mediated adaptive sublineage evolution.</title>
        <authorList>
            <person name="Fricke W.F."/>
            <person name="Mammel M.K."/>
            <person name="McDermott P.F."/>
            <person name="Tartera C."/>
            <person name="White D.G."/>
            <person name="Leclerc J.E."/>
            <person name="Ravel J."/>
            <person name="Cebula T.A."/>
        </authorList>
    </citation>
    <scope>NUCLEOTIDE SEQUENCE [LARGE SCALE GENOMIC DNA]</scope>
    <source>
        <strain>CVM19633</strain>
    </source>
</reference>
<feature type="chain" id="PRO_1000129944" description="Cell division protein FtsB">
    <location>
        <begin position="1"/>
        <end position="103"/>
    </location>
</feature>
<feature type="topological domain" description="Cytoplasmic" evidence="1">
    <location>
        <begin position="1"/>
        <end position="3"/>
    </location>
</feature>
<feature type="transmembrane region" description="Helical" evidence="1">
    <location>
        <begin position="4"/>
        <end position="21"/>
    </location>
</feature>
<feature type="topological domain" description="Periplasmic" evidence="1">
    <location>
        <begin position="22"/>
        <end position="103"/>
    </location>
</feature>
<feature type="coiled-coil region" evidence="1">
    <location>
        <begin position="33"/>
        <end position="62"/>
    </location>
</feature>
<protein>
    <recommendedName>
        <fullName evidence="1">Cell division protein FtsB</fullName>
    </recommendedName>
</protein>